<dbReference type="EMBL" id="AE007317">
    <property type="protein sequence ID" value="AAL00507.1"/>
    <property type="molecule type" value="Genomic_DNA"/>
</dbReference>
<dbReference type="PIR" id="F98084">
    <property type="entry name" value="F98084"/>
</dbReference>
<dbReference type="RefSeq" id="NP_359296.1">
    <property type="nucleotide sequence ID" value="NC_003098.1"/>
</dbReference>
<dbReference type="RefSeq" id="WP_000159554.1">
    <property type="nucleotide sequence ID" value="NC_003098.1"/>
</dbReference>
<dbReference type="SMR" id="P0A2U9"/>
<dbReference type="STRING" id="171101.spr1704"/>
<dbReference type="KEGG" id="spr:spr1704"/>
<dbReference type="PATRIC" id="fig|171101.6.peg.1843"/>
<dbReference type="eggNOG" id="COG0444">
    <property type="taxonomic scope" value="Bacteria"/>
</dbReference>
<dbReference type="HOGENOM" id="CLU_000604_1_23_9"/>
<dbReference type="Proteomes" id="UP000000586">
    <property type="component" value="Chromosome"/>
</dbReference>
<dbReference type="GO" id="GO:0005886">
    <property type="term" value="C:plasma membrane"/>
    <property type="evidence" value="ECO:0000318"/>
    <property type="project" value="GO_Central"/>
</dbReference>
<dbReference type="GO" id="GO:0005524">
    <property type="term" value="F:ATP binding"/>
    <property type="evidence" value="ECO:0007669"/>
    <property type="project" value="UniProtKB-KW"/>
</dbReference>
<dbReference type="GO" id="GO:0016887">
    <property type="term" value="F:ATP hydrolysis activity"/>
    <property type="evidence" value="ECO:0007669"/>
    <property type="project" value="InterPro"/>
</dbReference>
<dbReference type="GO" id="GO:0022857">
    <property type="term" value="F:transmembrane transporter activity"/>
    <property type="evidence" value="ECO:0000318"/>
    <property type="project" value="GO_Central"/>
</dbReference>
<dbReference type="GO" id="GO:0015833">
    <property type="term" value="P:peptide transport"/>
    <property type="evidence" value="ECO:0007669"/>
    <property type="project" value="UniProtKB-KW"/>
</dbReference>
<dbReference type="GO" id="GO:0015031">
    <property type="term" value="P:protein transport"/>
    <property type="evidence" value="ECO:0007669"/>
    <property type="project" value="UniProtKB-KW"/>
</dbReference>
<dbReference type="GO" id="GO:0055085">
    <property type="term" value="P:transmembrane transport"/>
    <property type="evidence" value="ECO:0000318"/>
    <property type="project" value="GO_Central"/>
</dbReference>
<dbReference type="CDD" id="cd03257">
    <property type="entry name" value="ABC_NikE_OppD_transporters"/>
    <property type="match status" value="1"/>
</dbReference>
<dbReference type="FunFam" id="3.40.50.300:FF:000016">
    <property type="entry name" value="Oligopeptide ABC transporter ATP-binding component"/>
    <property type="match status" value="1"/>
</dbReference>
<dbReference type="Gene3D" id="3.40.50.300">
    <property type="entry name" value="P-loop containing nucleotide triphosphate hydrolases"/>
    <property type="match status" value="1"/>
</dbReference>
<dbReference type="InterPro" id="IPR003593">
    <property type="entry name" value="AAA+_ATPase"/>
</dbReference>
<dbReference type="InterPro" id="IPR050388">
    <property type="entry name" value="ABC_Ni/Peptide_Import"/>
</dbReference>
<dbReference type="InterPro" id="IPR003439">
    <property type="entry name" value="ABC_transporter-like_ATP-bd"/>
</dbReference>
<dbReference type="InterPro" id="IPR017871">
    <property type="entry name" value="ABC_transporter-like_CS"/>
</dbReference>
<dbReference type="InterPro" id="IPR013563">
    <property type="entry name" value="Oligopep_ABC_C"/>
</dbReference>
<dbReference type="InterPro" id="IPR027417">
    <property type="entry name" value="P-loop_NTPase"/>
</dbReference>
<dbReference type="NCBIfam" id="TIGR01727">
    <property type="entry name" value="oligo_HPY"/>
    <property type="match status" value="1"/>
</dbReference>
<dbReference type="PANTHER" id="PTHR43297:SF2">
    <property type="entry name" value="DIPEPTIDE TRANSPORT ATP-BINDING PROTEIN DPPD"/>
    <property type="match status" value="1"/>
</dbReference>
<dbReference type="PANTHER" id="PTHR43297">
    <property type="entry name" value="OLIGOPEPTIDE TRANSPORT ATP-BINDING PROTEIN APPD"/>
    <property type="match status" value="1"/>
</dbReference>
<dbReference type="Pfam" id="PF00005">
    <property type="entry name" value="ABC_tran"/>
    <property type="match status" value="1"/>
</dbReference>
<dbReference type="Pfam" id="PF08352">
    <property type="entry name" value="oligo_HPY"/>
    <property type="match status" value="1"/>
</dbReference>
<dbReference type="SMART" id="SM00382">
    <property type="entry name" value="AAA"/>
    <property type="match status" value="1"/>
</dbReference>
<dbReference type="SUPFAM" id="SSF52540">
    <property type="entry name" value="P-loop containing nucleoside triphosphate hydrolases"/>
    <property type="match status" value="1"/>
</dbReference>
<dbReference type="PROSITE" id="PS00211">
    <property type="entry name" value="ABC_TRANSPORTER_1"/>
    <property type="match status" value="1"/>
</dbReference>
<dbReference type="PROSITE" id="PS50893">
    <property type="entry name" value="ABC_TRANSPORTER_2"/>
    <property type="match status" value="1"/>
</dbReference>
<reference key="1">
    <citation type="journal article" date="2001" name="J. Bacteriol.">
        <title>Genome of the bacterium Streptococcus pneumoniae strain R6.</title>
        <authorList>
            <person name="Hoskins J."/>
            <person name="Alborn W.E. Jr."/>
            <person name="Arnold J."/>
            <person name="Blaszczak L.C."/>
            <person name="Burgett S."/>
            <person name="DeHoff B.S."/>
            <person name="Estrem S.T."/>
            <person name="Fritz L."/>
            <person name="Fu D.-J."/>
            <person name="Fuller W."/>
            <person name="Geringer C."/>
            <person name="Gilmour R."/>
            <person name="Glass J.S."/>
            <person name="Khoja H."/>
            <person name="Kraft A.R."/>
            <person name="Lagace R.E."/>
            <person name="LeBlanc D.J."/>
            <person name="Lee L.N."/>
            <person name="Lefkowitz E.J."/>
            <person name="Lu J."/>
            <person name="Matsushima P."/>
            <person name="McAhren S.M."/>
            <person name="McHenney M."/>
            <person name="McLeaster K."/>
            <person name="Mundy C.W."/>
            <person name="Nicas T.I."/>
            <person name="Norris F.H."/>
            <person name="O'Gara M."/>
            <person name="Peery R.B."/>
            <person name="Robertson G.T."/>
            <person name="Rockey P."/>
            <person name="Sun P.-M."/>
            <person name="Winkler M.E."/>
            <person name="Yang Y."/>
            <person name="Young-Bellido M."/>
            <person name="Zhao G."/>
            <person name="Zook C.A."/>
            <person name="Baltz R.H."/>
            <person name="Jaskunas S.R."/>
            <person name="Rosteck P.R. Jr."/>
            <person name="Skatrud P.L."/>
            <person name="Glass J.I."/>
        </authorList>
    </citation>
    <scope>NUCLEOTIDE SEQUENCE [LARGE SCALE GENOMIC DNA]</scope>
    <source>
        <strain>ATCC BAA-255 / R6</strain>
    </source>
</reference>
<organism>
    <name type="scientific">Streptococcus pneumoniae (strain ATCC BAA-255 / R6)</name>
    <dbReference type="NCBI Taxonomy" id="171101"/>
    <lineage>
        <taxon>Bacteria</taxon>
        <taxon>Bacillati</taxon>
        <taxon>Bacillota</taxon>
        <taxon>Bacilli</taxon>
        <taxon>Lactobacillales</taxon>
        <taxon>Streptococcaceae</taxon>
        <taxon>Streptococcus</taxon>
    </lineage>
</organism>
<name>AMIE_STRR6</name>
<sequence>MTKEKNVILTARDIVVEFDVRDKVLTAIRGVSLELVEGEVLALVGESGSGKSVLTKTFTGMLEENGRIAQGSIDYRGQDLTALSSHKDWEQIRGAKIATIFQDPMTSLDPIKTIGSQITEVIVKHQGKTAKEAKELAIDYMNKVGIPDADRRFNEYPFQYSGGMRQRIVIAIALACRPDVLICDEPTTALDVTIQAQIIDLLKSLQNEYHFTTIFITHDLGVVASIADKVAVMYAGEIVEYGTVEEVFYDPRHPYTWSLLSSLPQLADDKGDLYSIPGTPPSLYTDLKGDAFALRSDYAMQIDFEQKAPQFSVSETHWAKTWLLHEDAPKVEKPAVIANLHDKIREKMGFAHLAD</sequence>
<keyword id="KW-0067">ATP-binding</keyword>
<keyword id="KW-1003">Cell membrane</keyword>
<keyword id="KW-0472">Membrane</keyword>
<keyword id="KW-0547">Nucleotide-binding</keyword>
<keyword id="KW-0571">Peptide transport</keyword>
<keyword id="KW-0653">Protein transport</keyword>
<keyword id="KW-1185">Reference proteome</keyword>
<keyword id="KW-0813">Transport</keyword>
<comment type="function">
    <text>Part of the binding-protein-dependent transport system for oligopeptides. Probably responsible for energy coupling to the transport system.</text>
</comment>
<comment type="subcellular location">
    <subcellularLocation>
        <location>Cell membrane</location>
        <topology>Peripheral membrane protein</topology>
    </subcellularLocation>
</comment>
<comment type="similarity">
    <text evidence="2">Belongs to the ABC transporter superfamily.</text>
</comment>
<protein>
    <recommendedName>
        <fullName>Oligopeptide transport ATP-binding protein AmiE</fullName>
    </recommendedName>
</protein>
<feature type="chain" id="PRO_0000091928" description="Oligopeptide transport ATP-binding protein AmiE">
    <location>
        <begin position="1"/>
        <end position="355"/>
    </location>
</feature>
<feature type="domain" description="ABC transporter" evidence="1">
    <location>
        <begin position="9"/>
        <end position="260"/>
    </location>
</feature>
<feature type="binding site" evidence="1">
    <location>
        <begin position="45"/>
        <end position="52"/>
    </location>
    <ligand>
        <name>ATP</name>
        <dbReference type="ChEBI" id="CHEBI:30616"/>
    </ligand>
</feature>
<proteinExistence type="inferred from homology"/>
<accession>P0A2U9</accession>
<accession>P18765</accession>
<evidence type="ECO:0000255" key="1">
    <source>
        <dbReference type="PROSITE-ProRule" id="PRU00434"/>
    </source>
</evidence>
<evidence type="ECO:0000305" key="2"/>
<gene>
    <name type="primary">amiE</name>
    <name type="ordered locus">spr1704</name>
</gene>